<keyword id="KW-0963">Cytoplasm</keyword>
<keyword id="KW-1185">Reference proteome</keyword>
<keyword id="KW-0346">Stress response</keyword>
<organism>
    <name type="scientific">Shigella flexneri</name>
    <dbReference type="NCBI Taxonomy" id="623"/>
    <lineage>
        <taxon>Bacteria</taxon>
        <taxon>Pseudomonadati</taxon>
        <taxon>Pseudomonadota</taxon>
        <taxon>Gammaproteobacteria</taxon>
        <taxon>Enterobacterales</taxon>
        <taxon>Enterobacteriaceae</taxon>
        <taxon>Shigella</taxon>
    </lineage>
</organism>
<evidence type="ECO:0000255" key="1">
    <source>
        <dbReference type="HAMAP-Rule" id="MF_02010"/>
    </source>
</evidence>
<evidence type="ECO:0000305" key="2"/>
<protein>
    <recommendedName>
        <fullName evidence="1">Anti-adapter protein IraD</fullName>
    </recommendedName>
</protein>
<accession>Q83P77</accession>
<accession>Q7UAR1</accession>
<sequence>MMRQSLQAVLPEISGNKTSLLRKSVCSDLLTLFNSPHSALPSLLVSGMPEWQVHNPSDKHLQSWYCRQLRSALLFHEPRIAALQVNLKEAYCHTLAISLEIMLYHDDEPLTFDLVWDNGGWRSATLENVS</sequence>
<dbReference type="EMBL" id="AE005674">
    <property type="protein sequence ID" value="AAN45613.2"/>
    <property type="status" value="ALT_INIT"/>
    <property type="molecule type" value="Genomic_DNA"/>
</dbReference>
<dbReference type="EMBL" id="AE014073">
    <property type="protein sequence ID" value="AAP19399.1"/>
    <property type="status" value="ALT_INIT"/>
    <property type="molecule type" value="Genomic_DNA"/>
</dbReference>
<dbReference type="RefSeq" id="NP_709906.2">
    <property type="nucleotide sequence ID" value="NC_004337.2"/>
</dbReference>
<dbReference type="RefSeq" id="WP_000986206.1">
    <property type="nucleotide sequence ID" value="NZ_WPGW01000192.1"/>
</dbReference>
<dbReference type="SMR" id="Q83P77"/>
<dbReference type="STRING" id="198214.SF4192"/>
<dbReference type="PaxDb" id="198214-SF4192"/>
<dbReference type="DNASU" id="1080655"/>
<dbReference type="GeneID" id="1025039"/>
<dbReference type="KEGG" id="sfl:SF4192"/>
<dbReference type="KEGG" id="sfx:S4448"/>
<dbReference type="PATRIC" id="fig|198214.7.peg.4945"/>
<dbReference type="HOGENOM" id="CLU_1977621_0_0_6"/>
<dbReference type="Proteomes" id="UP000001006">
    <property type="component" value="Chromosome"/>
</dbReference>
<dbReference type="Proteomes" id="UP000002673">
    <property type="component" value="Chromosome"/>
</dbReference>
<dbReference type="GO" id="GO:0005737">
    <property type="term" value="C:cytoplasm"/>
    <property type="evidence" value="ECO:0007669"/>
    <property type="project" value="UniProtKB-SubCell"/>
</dbReference>
<dbReference type="GO" id="GO:0043856">
    <property type="term" value="F:anti-sigma factor antagonist activity"/>
    <property type="evidence" value="ECO:0007669"/>
    <property type="project" value="InterPro"/>
</dbReference>
<dbReference type="GO" id="GO:0034599">
    <property type="term" value="P:cellular response to oxidative stress"/>
    <property type="evidence" value="ECO:0007669"/>
    <property type="project" value="UniProtKB-UniRule"/>
</dbReference>
<dbReference type="GO" id="GO:0006974">
    <property type="term" value="P:DNA damage response"/>
    <property type="evidence" value="ECO:0007669"/>
    <property type="project" value="InterPro"/>
</dbReference>
<dbReference type="HAMAP" id="MF_02010">
    <property type="entry name" value="IraD"/>
    <property type="match status" value="1"/>
</dbReference>
<dbReference type="InterPro" id="IPR023776">
    <property type="entry name" value="Anti-adapt_IraD"/>
</dbReference>
<dbReference type="InterPro" id="IPR007048">
    <property type="entry name" value="IraD/Gp25-like"/>
</dbReference>
<dbReference type="NCBIfam" id="NF010726">
    <property type="entry name" value="PRK14128.1-1"/>
    <property type="match status" value="1"/>
</dbReference>
<dbReference type="NCBIfam" id="NF010728">
    <property type="entry name" value="PRK14128.1-3"/>
    <property type="match status" value="1"/>
</dbReference>
<dbReference type="Pfam" id="PF04965">
    <property type="entry name" value="GPW_gp25"/>
    <property type="match status" value="1"/>
</dbReference>
<dbReference type="SUPFAM" id="SSF160719">
    <property type="entry name" value="gpW/gp25-like"/>
    <property type="match status" value="1"/>
</dbReference>
<proteinExistence type="inferred from homology"/>
<feature type="chain" id="PRO_0000337903" description="Anti-adapter protein IraD">
    <location>
        <begin position="1"/>
        <end position="130"/>
    </location>
</feature>
<comment type="function">
    <text evidence="1">Inhibits RpoS proteolysis by regulating RssB activity, thereby increasing the stability of the sigma stress factor RpoS during oxidative stress. Its effect on RpoS stability is due to its interaction with RssB, which probably blocks the interaction of RssB with RpoS, and the consequent delivery of the RssB-RpoS complex to the ClpXP protein degradation pathway.</text>
</comment>
<comment type="subunit">
    <text evidence="1">Interacts with RssB.</text>
</comment>
<comment type="subcellular location">
    <subcellularLocation>
        <location evidence="1">Cytoplasm</location>
    </subcellularLocation>
</comment>
<comment type="similarity">
    <text evidence="1">Belongs to the GpW/Gp25 family. IraD subfamily.</text>
</comment>
<comment type="sequence caution" evidence="2">
    <conflict type="erroneous initiation">
        <sequence resource="EMBL-CDS" id="AAN45613"/>
    </conflict>
</comment>
<comment type="sequence caution" evidence="2">
    <conflict type="erroneous initiation">
        <sequence resource="EMBL-CDS" id="AAP19399"/>
    </conflict>
</comment>
<reference key="1">
    <citation type="journal article" date="2002" name="Nucleic Acids Res.">
        <title>Genome sequence of Shigella flexneri 2a: insights into pathogenicity through comparison with genomes of Escherichia coli K12 and O157.</title>
        <authorList>
            <person name="Jin Q."/>
            <person name="Yuan Z."/>
            <person name="Xu J."/>
            <person name="Wang Y."/>
            <person name="Shen Y."/>
            <person name="Lu W."/>
            <person name="Wang J."/>
            <person name="Liu H."/>
            <person name="Yang J."/>
            <person name="Yang F."/>
            <person name="Zhang X."/>
            <person name="Zhang J."/>
            <person name="Yang G."/>
            <person name="Wu H."/>
            <person name="Qu D."/>
            <person name="Dong J."/>
            <person name="Sun L."/>
            <person name="Xue Y."/>
            <person name="Zhao A."/>
            <person name="Gao Y."/>
            <person name="Zhu J."/>
            <person name="Kan B."/>
            <person name="Ding K."/>
            <person name="Chen S."/>
            <person name="Cheng H."/>
            <person name="Yao Z."/>
            <person name="He B."/>
            <person name="Chen R."/>
            <person name="Ma D."/>
            <person name="Qiang B."/>
            <person name="Wen Y."/>
            <person name="Hou Y."/>
            <person name="Yu J."/>
        </authorList>
    </citation>
    <scope>NUCLEOTIDE SEQUENCE [LARGE SCALE GENOMIC DNA]</scope>
    <source>
        <strain>301 / Serotype 2a</strain>
    </source>
</reference>
<reference key="2">
    <citation type="journal article" date="2003" name="Infect. Immun.">
        <title>Complete genome sequence and comparative genomics of Shigella flexneri serotype 2a strain 2457T.</title>
        <authorList>
            <person name="Wei J."/>
            <person name="Goldberg M.B."/>
            <person name="Burland V."/>
            <person name="Venkatesan M.M."/>
            <person name="Deng W."/>
            <person name="Fournier G."/>
            <person name="Mayhew G.F."/>
            <person name="Plunkett G. III"/>
            <person name="Rose D.J."/>
            <person name="Darling A."/>
            <person name="Mau B."/>
            <person name="Perna N.T."/>
            <person name="Payne S.M."/>
            <person name="Runyen-Janecky L.J."/>
            <person name="Zhou S."/>
            <person name="Schwartz D.C."/>
            <person name="Blattner F.R."/>
        </authorList>
    </citation>
    <scope>NUCLEOTIDE SEQUENCE [LARGE SCALE GENOMIC DNA]</scope>
    <source>
        <strain>ATCC 700930 / 2457T / Serotype 2a</strain>
    </source>
</reference>
<name>IRAD_SHIFL</name>
<gene>
    <name evidence="1" type="primary">iraD</name>
    <name type="ordered locus">SF4192</name>
    <name type="ordered locus">S4448</name>
</gene>